<name>Y1985_MYCSK</name>
<feature type="chain" id="PRO_0000380745" description="Aldo-keto reductase Mkms_1985">
    <location>
        <begin position="1"/>
        <end position="276"/>
    </location>
</feature>
<feature type="region of interest" description="Disordered" evidence="3">
    <location>
        <begin position="257"/>
        <end position="276"/>
    </location>
</feature>
<feature type="active site" description="Proton donor" evidence="2">
    <location>
        <position position="50"/>
    </location>
</feature>
<feature type="binding site" evidence="1">
    <location>
        <position position="190"/>
    </location>
    <ligand>
        <name>NADPH</name>
        <dbReference type="ChEBI" id="CHEBI:57783"/>
    </ligand>
</feature>
<feature type="binding site" evidence="1">
    <location>
        <position position="228"/>
    </location>
    <ligand>
        <name>NADPH</name>
        <dbReference type="ChEBI" id="CHEBI:57783"/>
    </ligand>
</feature>
<feature type="binding site" evidence="1">
    <location>
        <position position="230"/>
    </location>
    <ligand>
        <name>NADPH</name>
        <dbReference type="ChEBI" id="CHEBI:57783"/>
    </ligand>
</feature>
<feature type="binding site" evidence="1">
    <location>
        <position position="231"/>
    </location>
    <ligand>
        <name>NADPH</name>
        <dbReference type="ChEBI" id="CHEBI:57783"/>
    </ligand>
</feature>
<feature type="binding site" evidence="1">
    <location>
        <position position="232"/>
    </location>
    <ligand>
        <name>NADPH</name>
        <dbReference type="ChEBI" id="CHEBI:57783"/>
    </ligand>
</feature>
<feature type="binding site" evidence="1">
    <location>
        <position position="236"/>
    </location>
    <ligand>
        <name>NADPH</name>
        <dbReference type="ChEBI" id="CHEBI:57783"/>
    </ligand>
</feature>
<feature type="binding site" evidence="1">
    <location>
        <position position="239"/>
    </location>
    <ligand>
        <name>NADPH</name>
        <dbReference type="ChEBI" id="CHEBI:57783"/>
    </ligand>
</feature>
<feature type="binding site" evidence="1">
    <location>
        <position position="240"/>
    </location>
    <ligand>
        <name>NADPH</name>
        <dbReference type="ChEBI" id="CHEBI:57783"/>
    </ligand>
</feature>
<proteinExistence type="inferred from homology"/>
<dbReference type="EC" id="1.1.1.-" evidence="1"/>
<dbReference type="EMBL" id="CP000518">
    <property type="protein sequence ID" value="ABL91184.1"/>
    <property type="molecule type" value="Genomic_DNA"/>
</dbReference>
<dbReference type="SMR" id="A1UEC6"/>
<dbReference type="STRING" id="189918.Mkms_1985"/>
<dbReference type="KEGG" id="mkm:Mkms_1985"/>
<dbReference type="HOGENOM" id="CLU_023205_0_1_11"/>
<dbReference type="OrthoDB" id="9804790at2"/>
<dbReference type="GO" id="GO:0004033">
    <property type="term" value="F:aldo-keto reductase (NADPH) activity"/>
    <property type="evidence" value="ECO:0007669"/>
    <property type="project" value="TreeGrafter"/>
</dbReference>
<dbReference type="FunFam" id="3.20.20.100:FF:000015">
    <property type="entry name" value="Oxidoreductase, aldo/keto reductase family"/>
    <property type="match status" value="1"/>
</dbReference>
<dbReference type="Gene3D" id="3.20.20.100">
    <property type="entry name" value="NADP-dependent oxidoreductase domain"/>
    <property type="match status" value="1"/>
</dbReference>
<dbReference type="InterPro" id="IPR020471">
    <property type="entry name" value="AKR"/>
</dbReference>
<dbReference type="InterPro" id="IPR018170">
    <property type="entry name" value="Aldo/ket_reductase_CS"/>
</dbReference>
<dbReference type="InterPro" id="IPR023210">
    <property type="entry name" value="NADP_OxRdtase_dom"/>
</dbReference>
<dbReference type="InterPro" id="IPR036812">
    <property type="entry name" value="NADP_OxRdtase_dom_sf"/>
</dbReference>
<dbReference type="PANTHER" id="PTHR43827">
    <property type="entry name" value="2,5-DIKETO-D-GLUCONIC ACID REDUCTASE"/>
    <property type="match status" value="1"/>
</dbReference>
<dbReference type="PANTHER" id="PTHR43827:SF3">
    <property type="entry name" value="NADP-DEPENDENT OXIDOREDUCTASE DOMAIN-CONTAINING PROTEIN"/>
    <property type="match status" value="1"/>
</dbReference>
<dbReference type="Pfam" id="PF00248">
    <property type="entry name" value="Aldo_ket_red"/>
    <property type="match status" value="1"/>
</dbReference>
<dbReference type="PIRSF" id="PIRSF000097">
    <property type="entry name" value="AKR"/>
    <property type="match status" value="1"/>
</dbReference>
<dbReference type="PRINTS" id="PR00069">
    <property type="entry name" value="ALDKETRDTASE"/>
</dbReference>
<dbReference type="SUPFAM" id="SSF51430">
    <property type="entry name" value="NAD(P)-linked oxidoreductase"/>
    <property type="match status" value="1"/>
</dbReference>
<dbReference type="PROSITE" id="PS00062">
    <property type="entry name" value="ALDOKETO_REDUCTASE_2"/>
    <property type="match status" value="1"/>
</dbReference>
<dbReference type="PROSITE" id="PS00063">
    <property type="entry name" value="ALDOKETO_REDUCTASE_3"/>
    <property type="match status" value="1"/>
</dbReference>
<protein>
    <recommendedName>
        <fullName evidence="1">Aldo-keto reductase Mkms_1985</fullName>
        <ecNumber evidence="1">1.1.1.-</ecNumber>
    </recommendedName>
</protein>
<organism>
    <name type="scientific">Mycobacterium sp. (strain KMS)</name>
    <dbReference type="NCBI Taxonomy" id="189918"/>
    <lineage>
        <taxon>Bacteria</taxon>
        <taxon>Bacillati</taxon>
        <taxon>Actinomycetota</taxon>
        <taxon>Actinomycetes</taxon>
        <taxon>Mycobacteriales</taxon>
        <taxon>Mycobacteriaceae</taxon>
        <taxon>Mycobacterium</taxon>
    </lineage>
</organism>
<evidence type="ECO:0000250" key="1">
    <source>
        <dbReference type="UniProtKB" id="A0QV09"/>
    </source>
</evidence>
<evidence type="ECO:0000250" key="2">
    <source>
        <dbReference type="UniProtKB" id="P80874"/>
    </source>
</evidence>
<evidence type="ECO:0000256" key="3">
    <source>
        <dbReference type="SAM" id="MobiDB-lite"/>
    </source>
</evidence>
<evidence type="ECO:0000305" key="4"/>
<sequence>MGAPLVALNDGNSIPQVGLGVWQTPPEDTERAVAAALAAGYRHVDTAAAYGNEEQTGRAIAQSGLDRSQVYLVTKLWNSEQGYDATLAAFEASVDRLGVDYLDLYLIHWPVPEKNLFVDTFKAFARLREDGRIRSIGVSNFEPEHLRVLIDSTGIVPAVNQIELHPLLPQRELRELHAQLGIATEAWSPLGQGSLLAHPTVTGVAESHGKTAAQALIRWHMQLGNIVIPKSVNPQRIESNFDVFDFELSEQDMASISSLEDGSRLGPDPKTFNFTG</sequence>
<gene>
    <name type="ordered locus">Mkms_1985</name>
</gene>
<keyword id="KW-0521">NADP</keyword>
<keyword id="KW-0560">Oxidoreductase</keyword>
<accession>A1UEC6</accession>
<comment type="similarity">
    <text evidence="4">Belongs to the aldo/keto reductase family.</text>
</comment>
<reference key="1">
    <citation type="submission" date="2006-12" db="EMBL/GenBank/DDBJ databases">
        <title>Complete sequence of chromosome of Mycobacterium sp. KMS.</title>
        <authorList>
            <consortium name="US DOE Joint Genome Institute"/>
            <person name="Copeland A."/>
            <person name="Lucas S."/>
            <person name="Lapidus A."/>
            <person name="Barry K."/>
            <person name="Detter J.C."/>
            <person name="Glavina del Rio T."/>
            <person name="Hammon N."/>
            <person name="Israni S."/>
            <person name="Dalin E."/>
            <person name="Tice H."/>
            <person name="Pitluck S."/>
            <person name="Kiss H."/>
            <person name="Brettin T."/>
            <person name="Bruce D."/>
            <person name="Han C."/>
            <person name="Tapia R."/>
            <person name="Gilna P."/>
            <person name="Schmutz J."/>
            <person name="Larimer F."/>
            <person name="Land M."/>
            <person name="Hauser L."/>
            <person name="Kyrpides N."/>
            <person name="Mikhailova N."/>
            <person name="Miller C.D."/>
            <person name="Richardson P."/>
        </authorList>
    </citation>
    <scope>NUCLEOTIDE SEQUENCE [LARGE SCALE GENOMIC DNA]</scope>
    <source>
        <strain>KMS</strain>
    </source>
</reference>